<sequence length="596" mass="66779">MSGSFSPCVVFTQMWLTLLVVTPVNGQHEAAQQSVVSLQPPWTTFFRGEVVTLTCYRFGFSVPQKTKWYQKRKTVKQTPGALVIKAHTLKVHESGEYWCQADSLLPSMHVNVEFSEDFLVLQAPPAVFEGDSVVLRCYAKKGIEAETLTFYKDGKALTLHPQSSEFYIHRANLKDNGQYKCTSKKKWSFGSLYTSNTVVVQVQELFPRPVLRARPSHPIDGSPVTLTCQTQLSAQKSDARLQFCFFRNLQLLGSGCSRSSEFHIPAIWTEESKRYQCKAETVNSQVSKQSTAFIIPVQRASARFQTHIIPASKLVFEGQLLLLNCSVKGVPGPLKFSWYKKDMLNKETKILKSSNAEFKISQVNISDAGEYYCEANNSRRSFVSRAFPITIKVPVSQPVLTLSTGKTQALEGDLMTLHCQSQRGSPCILYEFFYENVSLGNSSILSGGGAYFNFSMSTERSGNYYCTADNGLGAQCSEAIRISIFDMTKNRSVPMAAGITVGLLIMAVGVFLFYCWFSRKAGGKPTSDDSRNPSDSEPQEPTYYNVPACIELQPVYSNEPEENVIYTEVRRTQPRQKHADQESESPRSRCQMAEKK</sequence>
<comment type="function">
    <text evidence="2 7">Plays an important role in B-cell response to antigen that acts both as a negative or positive coreceptor. Inhibits B-cell receptor (BCR) signaling in the absence of CR2 stimulation but engagement with CR2 and the BCR lead to a superior calcium response compared to CR2 and BCR costimulation (By similarity). May be involved in B-cell development and differentiation in peripheral lymphoid organs and may be useful markers of B-cell stages. May have an immunoregulatory role in marginal zone B-cells. May play a role in fertilization (PubMed:36070373).</text>
</comment>
<comment type="subunit">
    <text evidence="2">Interacts with CR2. Interacts with CD19.</text>
</comment>
<comment type="subcellular location">
    <subcellularLocation>
        <location evidence="1">Cell membrane</location>
        <topology evidence="1">Single-pass type I membrane protein</topology>
    </subcellularLocation>
</comment>
<comment type="alternative products">
    <event type="alternative splicing"/>
    <isoform>
        <id>Q68SN8-1</id>
        <name>1</name>
        <sequence type="displayed"/>
    </isoform>
    <isoform>
        <id>Q68SN8-2</id>
        <name>2</name>
        <sequence type="described" ref="VSP_033309"/>
    </isoform>
</comment>
<comment type="tissue specificity">
    <text evidence="6">Preferentially expressed in marginal zone B cells.</text>
</comment>
<comment type="PTM">
    <text evidence="1">Phosphorylated on cytoplasmic tyrosines; required for interaction with protein tyrosine phosphatases and protein tyrosine kinases.</text>
</comment>
<comment type="disruption phenotype">
    <text evidence="7">Mating of knockout (KO) female and wild-type (WT) male results in 30% KO/WT pairs without fertilization output.</text>
</comment>
<comment type="caution">
    <text evidence="9">It is uncertain whether Met-1 or Met-14 is the initiator.</text>
</comment>
<comment type="sequence caution" evidence="9">
    <conflict type="erroneous initiation">
        <sequence resource="EMBL-CDS" id="AAO20873"/>
    </conflict>
    <text>Truncated N-terminus.</text>
</comment>
<feature type="signal peptide" evidence="3">
    <location>
        <begin position="1"/>
        <end position="26"/>
    </location>
</feature>
<feature type="chain" id="PRO_0000331641" description="Fc receptor-like protein 5">
    <location>
        <begin position="27"/>
        <end position="596"/>
    </location>
</feature>
<feature type="topological domain" description="Extracellular" evidence="3">
    <location>
        <begin position="27"/>
        <end position="496"/>
    </location>
</feature>
<feature type="transmembrane region" description="Helical" evidence="3">
    <location>
        <begin position="497"/>
        <end position="517"/>
    </location>
</feature>
<feature type="topological domain" description="Cytoplasmic" evidence="3">
    <location>
        <begin position="518"/>
        <end position="596"/>
    </location>
</feature>
<feature type="domain" description="Ig-like C2-type 1">
    <location>
        <begin position="34"/>
        <end position="115"/>
    </location>
</feature>
<feature type="domain" description="Ig-like C2-type 2">
    <location>
        <begin position="106"/>
        <end position="199"/>
    </location>
</feature>
<feature type="domain" description="Ig-like C2-type 3">
    <location>
        <begin position="207"/>
        <end position="294"/>
    </location>
</feature>
<feature type="domain" description="Ig-like C2-type 4">
    <location>
        <begin position="296"/>
        <end position="384"/>
    </location>
</feature>
<feature type="domain" description="Ig-like C2-type 5">
    <location>
        <begin position="398"/>
        <end position="483"/>
    </location>
</feature>
<feature type="region of interest" description="Disordered" evidence="5">
    <location>
        <begin position="522"/>
        <end position="544"/>
    </location>
</feature>
<feature type="region of interest" description="Disordered" evidence="5">
    <location>
        <begin position="561"/>
        <end position="596"/>
    </location>
</feature>
<feature type="compositionally biased region" description="Basic and acidic residues" evidence="5">
    <location>
        <begin position="577"/>
        <end position="596"/>
    </location>
</feature>
<feature type="glycosylation site" description="N-linked (GlcNAc...) asparagine" evidence="3">
    <location>
        <position position="324"/>
    </location>
</feature>
<feature type="glycosylation site" description="N-linked (GlcNAc...) asparagine" evidence="3">
    <location>
        <position position="436"/>
    </location>
</feature>
<feature type="disulfide bond" evidence="4">
    <location>
        <begin position="55"/>
        <end position="99"/>
    </location>
</feature>
<feature type="disulfide bond" evidence="4">
    <location>
        <begin position="137"/>
        <end position="181"/>
    </location>
</feature>
<feature type="disulfide bond" evidence="4">
    <location>
        <begin position="228"/>
        <end position="277"/>
    </location>
</feature>
<feature type="disulfide bond" evidence="4">
    <location>
        <begin position="325"/>
        <end position="373"/>
    </location>
</feature>
<feature type="disulfide bond" evidence="4">
    <location>
        <begin position="419"/>
        <end position="466"/>
    </location>
</feature>
<feature type="splice variant" id="VSP_033309" description="In isoform 2." evidence="8">
    <location>
        <begin position="29"/>
        <end position="116"/>
    </location>
</feature>
<feature type="sequence conflict" description="In Ref. 1; AAS91578 and 2; AAO20873." evidence="9" ref="1 2">
    <original>PQS</original>
    <variation>HQ</variation>
    <location>
        <begin position="161"/>
        <end position="163"/>
    </location>
</feature>
<feature type="sequence conflict" description="In Ref. 3; BAC40954." evidence="9" ref="3">
    <original>F</original>
    <variation>L</variation>
    <location>
        <position position="166"/>
    </location>
</feature>
<feature type="sequence conflict" description="In Ref. 1; AAS91578 and 2; AAO20873." evidence="9" ref="1 2">
    <original>Y</original>
    <variation>S</variation>
    <location>
        <position position="167"/>
    </location>
</feature>
<feature type="sequence conflict" description="In Ref. 3; BAC40954." evidence="9" ref="3">
    <original>R</original>
    <variation>H</variation>
    <location>
        <position position="170"/>
    </location>
</feature>
<feature type="sequence conflict" description="In Ref. 1; AAS91578 and 2; AAO20873." evidence="9" ref="1 2">
    <original>V</original>
    <variation>R</variation>
    <location>
        <position position="199"/>
    </location>
</feature>
<feature type="sequence conflict" description="In Ref. 1; AAS91578 and 2; AAO20873." evidence="9" ref="1 2">
    <original>K</original>
    <variation>R</variation>
    <location>
        <position position="273"/>
    </location>
</feature>
<feature type="sequence conflict" description="In Ref. 1; AAS91578, 2; AAO20873 and 3; BAC40954." evidence="9" ref="1 2 3">
    <original>S</original>
    <variation>R</variation>
    <location>
        <position position="287"/>
    </location>
</feature>
<feature type="sequence conflict" description="In Ref. 1; AAS91578 and 2; AAO20873." evidence="9" ref="1 2">
    <original>K</original>
    <variation>E</variation>
    <location>
        <position position="346"/>
    </location>
</feature>
<feature type="sequence conflict" description="In Ref. 1; AAS91578 and 2; AAO20873." evidence="9" ref="1 2">
    <original>Y</original>
    <variation>H</variation>
    <location>
        <position position="372"/>
    </location>
</feature>
<feature type="sequence conflict" description="In Ref. 3; BAC40954." evidence="9" ref="3">
    <original>C</original>
    <variation>R</variation>
    <location>
        <position position="373"/>
    </location>
</feature>
<feature type="sequence conflict" description="In Ref. 1; AAS91578, 2; AAO20873 and 3; BAC40954." evidence="9" ref="1 2 3">
    <original>N</original>
    <variation>T</variation>
    <location>
        <position position="376"/>
    </location>
</feature>
<dbReference type="EMBL" id="AY506558">
    <property type="protein sequence ID" value="AAS91578.1"/>
    <property type="molecule type" value="mRNA"/>
</dbReference>
<dbReference type="EMBL" id="AY158090">
    <property type="protein sequence ID" value="AAO20873.1"/>
    <property type="status" value="ALT_INIT"/>
    <property type="molecule type" value="mRNA"/>
</dbReference>
<dbReference type="EMBL" id="AK089756">
    <property type="protein sequence ID" value="BAC40954.1"/>
    <property type="molecule type" value="mRNA"/>
</dbReference>
<dbReference type="EMBL" id="AC163618">
    <property type="status" value="NOT_ANNOTATED_CDS"/>
    <property type="molecule type" value="Genomic_DNA"/>
</dbReference>
<dbReference type="CCDS" id="CCDS50943.1">
    <molecule id="Q68SN8-1"/>
</dbReference>
<dbReference type="CCDS" id="CCDS50944.1">
    <molecule id="Q68SN8-2"/>
</dbReference>
<dbReference type="RefSeq" id="NP_001106709.1">
    <molecule id="Q68SN8-2"/>
    <property type="nucleotide sequence ID" value="NM_001113238.1"/>
</dbReference>
<dbReference type="RefSeq" id="NP_899045.3">
    <molecule id="Q68SN8-1"/>
    <property type="nucleotide sequence ID" value="NM_183222.3"/>
</dbReference>
<dbReference type="SMR" id="Q68SN8"/>
<dbReference type="DIP" id="DIP-60955N"/>
<dbReference type="FunCoup" id="Q68SN8">
    <property type="interactions" value="38"/>
</dbReference>
<dbReference type="IntAct" id="Q68SN8">
    <property type="interactions" value="1"/>
</dbReference>
<dbReference type="STRING" id="10090.ENSMUSP00000142210"/>
<dbReference type="GlyCosmos" id="Q68SN8">
    <property type="glycosylation" value="2 sites, No reported glycans"/>
</dbReference>
<dbReference type="GlyGen" id="Q68SN8">
    <property type="glycosylation" value="2 sites"/>
</dbReference>
<dbReference type="PhosphoSitePlus" id="Q68SN8"/>
<dbReference type="PaxDb" id="10090-ENSMUSP00000050151"/>
<dbReference type="ProteomicsDB" id="271685">
    <molecule id="Q68SN8-1"/>
</dbReference>
<dbReference type="ProteomicsDB" id="271686">
    <molecule id="Q68SN8-2"/>
</dbReference>
<dbReference type="Antibodypedia" id="47044">
    <property type="antibodies" value="297 antibodies from 31 providers"/>
</dbReference>
<dbReference type="DNASU" id="329693"/>
<dbReference type="Ensembl" id="ENSMUST00000049926.15">
    <molecule id="Q68SN8-1"/>
    <property type="protein sequence ID" value="ENSMUSP00000050151.9"/>
    <property type="gene ID" value="ENSMUSG00000048031.16"/>
</dbReference>
<dbReference type="Ensembl" id="ENSMUST00000166297.7">
    <molecule id="Q68SN8-2"/>
    <property type="protein sequence ID" value="ENSMUSP00000131176.2"/>
    <property type="gene ID" value="ENSMUSG00000048031.16"/>
</dbReference>
<dbReference type="Ensembl" id="ENSMUST00000193229.6">
    <molecule id="Q68SN8-2"/>
    <property type="protein sequence ID" value="ENSMUSP00000141311.2"/>
    <property type="gene ID" value="ENSMUSG00000048031.16"/>
</dbReference>
<dbReference type="Ensembl" id="ENSMUST00000194102.6">
    <molecule id="Q68SN8-1"/>
    <property type="protein sequence ID" value="ENSMUSP00000142210.2"/>
    <property type="gene ID" value="ENSMUSG00000048031.16"/>
</dbReference>
<dbReference type="GeneID" id="329693"/>
<dbReference type="KEGG" id="mmu:329693"/>
<dbReference type="UCSC" id="uc008psf.1">
    <molecule id="Q68SN8-2"/>
    <property type="organism name" value="mouse"/>
</dbReference>
<dbReference type="UCSC" id="uc012crg.1">
    <molecule id="Q68SN8-1"/>
    <property type="organism name" value="mouse"/>
</dbReference>
<dbReference type="AGR" id="MGI:3053558"/>
<dbReference type="CTD" id="83416"/>
<dbReference type="MGI" id="MGI:3053558">
    <property type="gene designation" value="Fcrl5"/>
</dbReference>
<dbReference type="VEuPathDB" id="HostDB:ENSMUSG00000048031"/>
<dbReference type="eggNOG" id="ENOG502S65W">
    <property type="taxonomic scope" value="Eukaryota"/>
</dbReference>
<dbReference type="GeneTree" id="ENSGT01050000244808"/>
<dbReference type="HOGENOM" id="CLU_023383_6_1_1"/>
<dbReference type="InParanoid" id="Q68SN8"/>
<dbReference type="OrthoDB" id="9448246at2759"/>
<dbReference type="BioGRID-ORCS" id="329693">
    <property type="hits" value="3 hits in 76 CRISPR screens"/>
</dbReference>
<dbReference type="PRO" id="PR:Q68SN8"/>
<dbReference type="Proteomes" id="UP000000589">
    <property type="component" value="Chromosome 3"/>
</dbReference>
<dbReference type="RNAct" id="Q68SN8">
    <property type="molecule type" value="protein"/>
</dbReference>
<dbReference type="Bgee" id="ENSMUSG00000048031">
    <property type="expression patterns" value="Expressed in spleen and 6 other cell types or tissues"/>
</dbReference>
<dbReference type="ExpressionAtlas" id="Q68SN8">
    <property type="expression patterns" value="baseline and differential"/>
</dbReference>
<dbReference type="GO" id="GO:0005886">
    <property type="term" value="C:plasma membrane"/>
    <property type="evidence" value="ECO:0000314"/>
    <property type="project" value="MGI"/>
</dbReference>
<dbReference type="GO" id="GO:0043235">
    <property type="term" value="C:receptor complex"/>
    <property type="evidence" value="ECO:0000266"/>
    <property type="project" value="MGI"/>
</dbReference>
<dbReference type="GO" id="GO:0050853">
    <property type="term" value="P:B cell receptor signaling pathway"/>
    <property type="evidence" value="ECO:0000314"/>
    <property type="project" value="MGI"/>
</dbReference>
<dbReference type="GO" id="GO:0051649">
    <property type="term" value="P:establishment of localization in cell"/>
    <property type="evidence" value="ECO:0000314"/>
    <property type="project" value="MGI"/>
</dbReference>
<dbReference type="GO" id="GO:0050859">
    <property type="term" value="P:negative regulation of B cell receptor signaling pathway"/>
    <property type="evidence" value="ECO:0000314"/>
    <property type="project" value="MGI"/>
</dbReference>
<dbReference type="GO" id="GO:0051280">
    <property type="term" value="P:negative regulation of release of sequestered calcium ion into cytosol"/>
    <property type="evidence" value="ECO:0000314"/>
    <property type="project" value="MGI"/>
</dbReference>
<dbReference type="GO" id="GO:0051209">
    <property type="term" value="P:release of sequestered calcium ion into cytosol"/>
    <property type="evidence" value="ECO:0000314"/>
    <property type="project" value="MGI"/>
</dbReference>
<dbReference type="GO" id="GO:0007338">
    <property type="term" value="P:single fertilization"/>
    <property type="evidence" value="ECO:0007669"/>
    <property type="project" value="UniProtKB-KW"/>
</dbReference>
<dbReference type="CDD" id="cd00096">
    <property type="entry name" value="Ig"/>
    <property type="match status" value="1"/>
</dbReference>
<dbReference type="FunFam" id="2.60.40.10:FF:000357">
    <property type="entry name" value="Fc receptor like 1"/>
    <property type="match status" value="1"/>
</dbReference>
<dbReference type="FunFam" id="2.60.40.10:FF:000651">
    <property type="entry name" value="Fc receptor like 1"/>
    <property type="match status" value="1"/>
</dbReference>
<dbReference type="Gene3D" id="2.60.40.10">
    <property type="entry name" value="Immunoglobulins"/>
    <property type="match status" value="5"/>
</dbReference>
<dbReference type="InterPro" id="IPR007110">
    <property type="entry name" value="Ig-like_dom"/>
</dbReference>
<dbReference type="InterPro" id="IPR036179">
    <property type="entry name" value="Ig-like_dom_sf"/>
</dbReference>
<dbReference type="InterPro" id="IPR013783">
    <property type="entry name" value="Ig-like_fold"/>
</dbReference>
<dbReference type="InterPro" id="IPR050488">
    <property type="entry name" value="Ig_Fc_receptor"/>
</dbReference>
<dbReference type="InterPro" id="IPR003599">
    <property type="entry name" value="Ig_sub"/>
</dbReference>
<dbReference type="InterPro" id="IPR003598">
    <property type="entry name" value="Ig_sub2"/>
</dbReference>
<dbReference type="PANTHER" id="PTHR11481:SF117">
    <property type="entry name" value="FC RECEPTOR-LIKE PROTEIN 1"/>
    <property type="match status" value="1"/>
</dbReference>
<dbReference type="PANTHER" id="PTHR11481">
    <property type="entry name" value="IMMUNOGLOBULIN FC RECEPTOR"/>
    <property type="match status" value="1"/>
</dbReference>
<dbReference type="Pfam" id="PF13895">
    <property type="entry name" value="Ig_2"/>
    <property type="match status" value="3"/>
</dbReference>
<dbReference type="Pfam" id="PF13927">
    <property type="entry name" value="Ig_3"/>
    <property type="match status" value="1"/>
</dbReference>
<dbReference type="PIRSF" id="PIRSF000615">
    <property type="entry name" value="TyrPK_CSF1-R"/>
    <property type="match status" value="1"/>
</dbReference>
<dbReference type="SMART" id="SM00409">
    <property type="entry name" value="IG"/>
    <property type="match status" value="5"/>
</dbReference>
<dbReference type="SMART" id="SM00408">
    <property type="entry name" value="IGc2"/>
    <property type="match status" value="4"/>
</dbReference>
<dbReference type="SUPFAM" id="SSF48726">
    <property type="entry name" value="Immunoglobulin"/>
    <property type="match status" value="5"/>
</dbReference>
<dbReference type="PROSITE" id="PS50835">
    <property type="entry name" value="IG_LIKE"/>
    <property type="match status" value="5"/>
</dbReference>
<accession>Q68SN8</accession>
<accession>E9QLI5</accession>
<accession>Q80WN2</accession>
<accession>Q8BJA5</accession>
<reference key="1">
    <citation type="journal article" date="2004" name="Int. Immunol.">
        <title>Differential B cell expression of mouse Fc receptor homologs.</title>
        <authorList>
            <person name="Davis R.S."/>
            <person name="Stephan R.P."/>
            <person name="Chen C.-C."/>
            <person name="Dennis G. Jr."/>
            <person name="Cooper M.D."/>
        </authorList>
    </citation>
    <scope>NUCLEOTIDE SEQUENCE [MRNA] (ISOFORM 1)</scope>
    <scope>TISSUE SPECIFICITY</scope>
    <source>
        <strain>BALB/cJ</strain>
        <tissue>Spleen</tissue>
    </source>
</reference>
<reference key="2">
    <citation type="submission" date="2002-10" db="EMBL/GenBank/DDBJ databases">
        <title>Molecular cloning of mouse BXMAS1 homologs; homologous to IgFc receptor.</title>
        <authorList>
            <person name="Nakayama Y."/>
            <person name="Maher S.E."/>
            <person name="Weissman S.M."/>
            <person name="Bothwell A.L.M."/>
        </authorList>
    </citation>
    <scope>NUCLEOTIDE SEQUENCE [MRNA] (ISOFORM 1)</scope>
    <source>
        <strain>C57BL/6J</strain>
    </source>
</reference>
<reference key="3">
    <citation type="journal article" date="2005" name="Science">
        <title>The transcriptional landscape of the mammalian genome.</title>
        <authorList>
            <person name="Carninci P."/>
            <person name="Kasukawa T."/>
            <person name="Katayama S."/>
            <person name="Gough J."/>
            <person name="Frith M.C."/>
            <person name="Maeda N."/>
            <person name="Oyama R."/>
            <person name="Ravasi T."/>
            <person name="Lenhard B."/>
            <person name="Wells C."/>
            <person name="Kodzius R."/>
            <person name="Shimokawa K."/>
            <person name="Bajic V.B."/>
            <person name="Brenner S.E."/>
            <person name="Batalov S."/>
            <person name="Forrest A.R."/>
            <person name="Zavolan M."/>
            <person name="Davis M.J."/>
            <person name="Wilming L.G."/>
            <person name="Aidinis V."/>
            <person name="Allen J.E."/>
            <person name="Ambesi-Impiombato A."/>
            <person name="Apweiler R."/>
            <person name="Aturaliya R.N."/>
            <person name="Bailey T.L."/>
            <person name="Bansal M."/>
            <person name="Baxter L."/>
            <person name="Beisel K.W."/>
            <person name="Bersano T."/>
            <person name="Bono H."/>
            <person name="Chalk A.M."/>
            <person name="Chiu K.P."/>
            <person name="Choudhary V."/>
            <person name="Christoffels A."/>
            <person name="Clutterbuck D.R."/>
            <person name="Crowe M.L."/>
            <person name="Dalla E."/>
            <person name="Dalrymple B.P."/>
            <person name="de Bono B."/>
            <person name="Della Gatta G."/>
            <person name="di Bernardo D."/>
            <person name="Down T."/>
            <person name="Engstrom P."/>
            <person name="Fagiolini M."/>
            <person name="Faulkner G."/>
            <person name="Fletcher C.F."/>
            <person name="Fukushima T."/>
            <person name="Furuno M."/>
            <person name="Futaki S."/>
            <person name="Gariboldi M."/>
            <person name="Georgii-Hemming P."/>
            <person name="Gingeras T.R."/>
            <person name="Gojobori T."/>
            <person name="Green R.E."/>
            <person name="Gustincich S."/>
            <person name="Harbers M."/>
            <person name="Hayashi Y."/>
            <person name="Hensch T.K."/>
            <person name="Hirokawa N."/>
            <person name="Hill D."/>
            <person name="Huminiecki L."/>
            <person name="Iacono M."/>
            <person name="Ikeo K."/>
            <person name="Iwama A."/>
            <person name="Ishikawa T."/>
            <person name="Jakt M."/>
            <person name="Kanapin A."/>
            <person name="Katoh M."/>
            <person name="Kawasawa Y."/>
            <person name="Kelso J."/>
            <person name="Kitamura H."/>
            <person name="Kitano H."/>
            <person name="Kollias G."/>
            <person name="Krishnan S.P."/>
            <person name="Kruger A."/>
            <person name="Kummerfeld S.K."/>
            <person name="Kurochkin I.V."/>
            <person name="Lareau L.F."/>
            <person name="Lazarevic D."/>
            <person name="Lipovich L."/>
            <person name="Liu J."/>
            <person name="Liuni S."/>
            <person name="McWilliam S."/>
            <person name="Madan Babu M."/>
            <person name="Madera M."/>
            <person name="Marchionni L."/>
            <person name="Matsuda H."/>
            <person name="Matsuzawa S."/>
            <person name="Miki H."/>
            <person name="Mignone F."/>
            <person name="Miyake S."/>
            <person name="Morris K."/>
            <person name="Mottagui-Tabar S."/>
            <person name="Mulder N."/>
            <person name="Nakano N."/>
            <person name="Nakauchi H."/>
            <person name="Ng P."/>
            <person name="Nilsson R."/>
            <person name="Nishiguchi S."/>
            <person name="Nishikawa S."/>
            <person name="Nori F."/>
            <person name="Ohara O."/>
            <person name="Okazaki Y."/>
            <person name="Orlando V."/>
            <person name="Pang K.C."/>
            <person name="Pavan W.J."/>
            <person name="Pavesi G."/>
            <person name="Pesole G."/>
            <person name="Petrovsky N."/>
            <person name="Piazza S."/>
            <person name="Reed J."/>
            <person name="Reid J.F."/>
            <person name="Ring B.Z."/>
            <person name="Ringwald M."/>
            <person name="Rost B."/>
            <person name="Ruan Y."/>
            <person name="Salzberg S.L."/>
            <person name="Sandelin A."/>
            <person name="Schneider C."/>
            <person name="Schoenbach C."/>
            <person name="Sekiguchi K."/>
            <person name="Semple C.A."/>
            <person name="Seno S."/>
            <person name="Sessa L."/>
            <person name="Sheng Y."/>
            <person name="Shibata Y."/>
            <person name="Shimada H."/>
            <person name="Shimada K."/>
            <person name="Silva D."/>
            <person name="Sinclair B."/>
            <person name="Sperling S."/>
            <person name="Stupka E."/>
            <person name="Sugiura K."/>
            <person name="Sultana R."/>
            <person name="Takenaka Y."/>
            <person name="Taki K."/>
            <person name="Tammoja K."/>
            <person name="Tan S.L."/>
            <person name="Tang S."/>
            <person name="Taylor M.S."/>
            <person name="Tegner J."/>
            <person name="Teichmann S.A."/>
            <person name="Ueda H.R."/>
            <person name="van Nimwegen E."/>
            <person name="Verardo R."/>
            <person name="Wei C.L."/>
            <person name="Yagi K."/>
            <person name="Yamanishi H."/>
            <person name="Zabarovsky E."/>
            <person name="Zhu S."/>
            <person name="Zimmer A."/>
            <person name="Hide W."/>
            <person name="Bult C."/>
            <person name="Grimmond S.M."/>
            <person name="Teasdale R.D."/>
            <person name="Liu E.T."/>
            <person name="Brusic V."/>
            <person name="Quackenbush J."/>
            <person name="Wahlestedt C."/>
            <person name="Mattick J.S."/>
            <person name="Hume D.A."/>
            <person name="Kai C."/>
            <person name="Sasaki D."/>
            <person name="Tomaru Y."/>
            <person name="Fukuda S."/>
            <person name="Kanamori-Katayama M."/>
            <person name="Suzuki M."/>
            <person name="Aoki J."/>
            <person name="Arakawa T."/>
            <person name="Iida J."/>
            <person name="Imamura K."/>
            <person name="Itoh M."/>
            <person name="Kato T."/>
            <person name="Kawaji H."/>
            <person name="Kawagashira N."/>
            <person name="Kawashima T."/>
            <person name="Kojima M."/>
            <person name="Kondo S."/>
            <person name="Konno H."/>
            <person name="Nakano K."/>
            <person name="Ninomiya N."/>
            <person name="Nishio T."/>
            <person name="Okada M."/>
            <person name="Plessy C."/>
            <person name="Shibata K."/>
            <person name="Shiraki T."/>
            <person name="Suzuki S."/>
            <person name="Tagami M."/>
            <person name="Waki K."/>
            <person name="Watahiki A."/>
            <person name="Okamura-Oho Y."/>
            <person name="Suzuki H."/>
            <person name="Kawai J."/>
            <person name="Hayashizaki Y."/>
        </authorList>
    </citation>
    <scope>NUCLEOTIDE SEQUENCE [LARGE SCALE MRNA] (ISOFORM 2)</scope>
    <source>
        <strain>NOD</strain>
        <tissue>Spleen</tissue>
    </source>
</reference>
<reference key="4">
    <citation type="journal article" date="2009" name="PLoS Biol.">
        <title>Lineage-specific biology revealed by a finished genome assembly of the mouse.</title>
        <authorList>
            <person name="Church D.M."/>
            <person name="Goodstadt L."/>
            <person name="Hillier L.W."/>
            <person name="Zody M.C."/>
            <person name="Goldstein S."/>
            <person name="She X."/>
            <person name="Bult C.J."/>
            <person name="Agarwala R."/>
            <person name="Cherry J.L."/>
            <person name="DiCuccio M."/>
            <person name="Hlavina W."/>
            <person name="Kapustin Y."/>
            <person name="Meric P."/>
            <person name="Maglott D."/>
            <person name="Birtle Z."/>
            <person name="Marques A.C."/>
            <person name="Graves T."/>
            <person name="Zhou S."/>
            <person name="Teague B."/>
            <person name="Potamousis K."/>
            <person name="Churas C."/>
            <person name="Place M."/>
            <person name="Herschleb J."/>
            <person name="Runnheim R."/>
            <person name="Forrest D."/>
            <person name="Amos-Landgraf J."/>
            <person name="Schwartz D.C."/>
            <person name="Cheng Z."/>
            <person name="Lindblad-Toh K."/>
            <person name="Eichler E.E."/>
            <person name="Ponting C.P."/>
        </authorList>
    </citation>
    <scope>NUCLEOTIDE SEQUENCE [LARGE SCALE GENOMIC DNA]</scope>
    <source>
        <strain>C57BL/6J</strain>
    </source>
</reference>
<reference key="5">
    <citation type="journal article" date="2010" name="Cell">
        <title>A tissue-specific atlas of mouse protein phosphorylation and expression.</title>
        <authorList>
            <person name="Huttlin E.L."/>
            <person name="Jedrychowski M.P."/>
            <person name="Elias J.E."/>
            <person name="Goswami T."/>
            <person name="Rad R."/>
            <person name="Beausoleil S.A."/>
            <person name="Villen J."/>
            <person name="Haas W."/>
            <person name="Sowa M.E."/>
            <person name="Gygi S.P."/>
        </authorList>
    </citation>
    <scope>IDENTIFICATION BY MASS SPECTROMETRY [LARGE SCALE ANALYSIS]</scope>
    <source>
        <tissue>Spleen</tissue>
    </source>
</reference>
<reference key="6">
    <citation type="journal article" date="2022" name="Sci. Adv.">
        <title>MAIA, Fc receptor-like 3, supersedes JUNO as IZUMO1 receptor during human fertilization.</title>
        <authorList>
            <person name="Vondrakova J."/>
            <person name="Frolikova M."/>
            <person name="Ded L."/>
            <person name="Cerny J."/>
            <person name="Postlerova P."/>
            <person name="Palenikova V."/>
            <person name="Simonik O."/>
            <person name="Nahacka Z."/>
            <person name="Basus K."/>
            <person name="Valaskova E."/>
            <person name="Machan R."/>
            <person name="Pacey A."/>
            <person name="Holubcova Z."/>
            <person name="Koubek P."/>
            <person name="Ezrova Z."/>
            <person name="Park S."/>
            <person name="Liu R."/>
            <person name="Partha R."/>
            <person name="Clark N."/>
            <person name="Neuzil J."/>
            <person name="Ikawa M."/>
            <person name="Erickson K."/>
            <person name="Lam K.S."/>
            <person name="Moore H."/>
            <person name="Komrskova K."/>
        </authorList>
    </citation>
    <scope>FUNCTION</scope>
    <scope>DISRUPTION PHENOTYPE</scope>
</reference>
<keyword id="KW-0025">Alternative splicing</keyword>
<keyword id="KW-1003">Cell membrane</keyword>
<keyword id="KW-1015">Disulfide bond</keyword>
<keyword id="KW-0278">Fertilization</keyword>
<keyword id="KW-0325">Glycoprotein</keyword>
<keyword id="KW-0393">Immunoglobulin domain</keyword>
<keyword id="KW-0472">Membrane</keyword>
<keyword id="KW-0597">Phosphoprotein</keyword>
<keyword id="KW-0675">Receptor</keyword>
<keyword id="KW-1185">Reference proteome</keyword>
<keyword id="KW-0677">Repeat</keyword>
<keyword id="KW-0732">Signal</keyword>
<keyword id="KW-0812">Transmembrane</keyword>
<keyword id="KW-1133">Transmembrane helix</keyword>
<name>FCRL5_MOUSE</name>
<proteinExistence type="evidence at protein level"/>
<organism>
    <name type="scientific">Mus musculus</name>
    <name type="common">Mouse</name>
    <dbReference type="NCBI Taxonomy" id="10090"/>
    <lineage>
        <taxon>Eukaryota</taxon>
        <taxon>Metazoa</taxon>
        <taxon>Chordata</taxon>
        <taxon>Craniata</taxon>
        <taxon>Vertebrata</taxon>
        <taxon>Euteleostomi</taxon>
        <taxon>Mammalia</taxon>
        <taxon>Eutheria</taxon>
        <taxon>Euarchontoglires</taxon>
        <taxon>Glires</taxon>
        <taxon>Rodentia</taxon>
        <taxon>Myomorpha</taxon>
        <taxon>Muroidea</taxon>
        <taxon>Muridae</taxon>
        <taxon>Murinae</taxon>
        <taxon>Mus</taxon>
        <taxon>Mus</taxon>
    </lineage>
</organism>
<evidence type="ECO:0000250" key="1"/>
<evidence type="ECO:0000250" key="2">
    <source>
        <dbReference type="UniProtKB" id="Q96RD9"/>
    </source>
</evidence>
<evidence type="ECO:0000255" key="3"/>
<evidence type="ECO:0000255" key="4">
    <source>
        <dbReference type="PROSITE-ProRule" id="PRU00114"/>
    </source>
</evidence>
<evidence type="ECO:0000256" key="5">
    <source>
        <dbReference type="SAM" id="MobiDB-lite"/>
    </source>
</evidence>
<evidence type="ECO:0000269" key="6">
    <source>
    </source>
</evidence>
<evidence type="ECO:0000269" key="7">
    <source>
    </source>
</evidence>
<evidence type="ECO:0000303" key="8">
    <source>
    </source>
</evidence>
<evidence type="ECO:0000305" key="9"/>
<protein>
    <recommendedName>
        <fullName>Fc receptor-like protein 5</fullName>
        <shortName>FcR-like protein 5</shortName>
        <shortName>FcRL5</shortName>
    </recommendedName>
    <alternativeName>
        <fullName>BXMAS1-like protein 2</fullName>
        <shortName>mBXMH2</shortName>
    </alternativeName>
    <alternativeName>
        <fullName>Fc receptor homolog 3</fullName>
        <shortName>FcRH3</shortName>
        <shortName>moFcRH3</shortName>
    </alternativeName>
    <cdAntigenName>CD307e</cdAntigenName>
</protein>
<gene>
    <name type="primary">Fcrl5</name>
    <name type="synonym">Fcrh3</name>
</gene>